<evidence type="ECO:0000250" key="1"/>
<evidence type="ECO:0000305" key="2"/>
<accession>Q9MUU5</accession>
<name>RK5_MESVI</name>
<geneLocation type="chloroplast"/>
<sequence length="184" mass="20650">MVQRLKTLYLESAVLKLQETFGYKNPHQIPRIKKIVINCGLSEASQNSKSLESAMKELSIIAGQKGVITRAKKAIAGFKIREGLPIGICITLRGDSMYAFLDRLINLALPRIRDFQGVSSKSFDGHGNYNLGLKEQLMFPEIDYDQIDKIRGMDICIVTNAKTDSEGFYLLEVLGMPFKEKFAN</sequence>
<feature type="chain" id="PRO_0000125044" description="Large ribosomal subunit protein uL5c">
    <location>
        <begin position="1"/>
        <end position="184"/>
    </location>
</feature>
<gene>
    <name type="primary">rpl5</name>
</gene>
<keyword id="KW-0150">Chloroplast</keyword>
<keyword id="KW-0934">Plastid</keyword>
<keyword id="KW-0687">Ribonucleoprotein</keyword>
<keyword id="KW-0689">Ribosomal protein</keyword>
<keyword id="KW-0694">RNA-binding</keyword>
<keyword id="KW-0699">rRNA-binding</keyword>
<comment type="function">
    <text evidence="1">Binds 5S rRNA, forms part of the central protuberance of the 50S subunit.</text>
</comment>
<comment type="subunit">
    <text evidence="1">Part of the 50S ribosomal subunit; contacts the 5S rRNA.</text>
</comment>
<comment type="subcellular location">
    <subcellularLocation>
        <location>Plastid</location>
        <location>Chloroplast</location>
    </subcellularLocation>
</comment>
<comment type="similarity">
    <text evidence="2">Belongs to the universal ribosomal protein uL5 family.</text>
</comment>
<dbReference type="EMBL" id="AF166114">
    <property type="protein sequence ID" value="AAF43806.1"/>
    <property type="molecule type" value="Genomic_DNA"/>
</dbReference>
<dbReference type="RefSeq" id="NP_038365.1">
    <property type="nucleotide sequence ID" value="NC_002186.1"/>
</dbReference>
<dbReference type="SMR" id="Q9MUU5"/>
<dbReference type="GeneID" id="800904"/>
<dbReference type="GO" id="GO:0009507">
    <property type="term" value="C:chloroplast"/>
    <property type="evidence" value="ECO:0007669"/>
    <property type="project" value="UniProtKB-SubCell"/>
</dbReference>
<dbReference type="GO" id="GO:1990904">
    <property type="term" value="C:ribonucleoprotein complex"/>
    <property type="evidence" value="ECO:0007669"/>
    <property type="project" value="UniProtKB-KW"/>
</dbReference>
<dbReference type="GO" id="GO:0005840">
    <property type="term" value="C:ribosome"/>
    <property type="evidence" value="ECO:0007669"/>
    <property type="project" value="UniProtKB-KW"/>
</dbReference>
<dbReference type="GO" id="GO:0019843">
    <property type="term" value="F:rRNA binding"/>
    <property type="evidence" value="ECO:0007669"/>
    <property type="project" value="UniProtKB-UniRule"/>
</dbReference>
<dbReference type="GO" id="GO:0003735">
    <property type="term" value="F:structural constituent of ribosome"/>
    <property type="evidence" value="ECO:0007669"/>
    <property type="project" value="InterPro"/>
</dbReference>
<dbReference type="GO" id="GO:0006412">
    <property type="term" value="P:translation"/>
    <property type="evidence" value="ECO:0007669"/>
    <property type="project" value="UniProtKB-UniRule"/>
</dbReference>
<dbReference type="FunFam" id="3.30.1440.10:FF:000001">
    <property type="entry name" value="50S ribosomal protein L5"/>
    <property type="match status" value="1"/>
</dbReference>
<dbReference type="Gene3D" id="3.30.1440.10">
    <property type="match status" value="1"/>
</dbReference>
<dbReference type="HAMAP" id="MF_01333_B">
    <property type="entry name" value="Ribosomal_uL5_B"/>
    <property type="match status" value="1"/>
</dbReference>
<dbReference type="InterPro" id="IPR002132">
    <property type="entry name" value="Ribosomal_uL5"/>
</dbReference>
<dbReference type="InterPro" id="IPR020930">
    <property type="entry name" value="Ribosomal_uL5_bac-type"/>
</dbReference>
<dbReference type="InterPro" id="IPR031309">
    <property type="entry name" value="Ribosomal_uL5_C"/>
</dbReference>
<dbReference type="InterPro" id="IPR020929">
    <property type="entry name" value="Ribosomal_uL5_CS"/>
</dbReference>
<dbReference type="InterPro" id="IPR022803">
    <property type="entry name" value="Ribosomal_uL5_dom_sf"/>
</dbReference>
<dbReference type="InterPro" id="IPR031310">
    <property type="entry name" value="Ribosomal_uL5_N"/>
</dbReference>
<dbReference type="NCBIfam" id="NF000585">
    <property type="entry name" value="PRK00010.1"/>
    <property type="match status" value="1"/>
</dbReference>
<dbReference type="PANTHER" id="PTHR11994">
    <property type="entry name" value="60S RIBOSOMAL PROTEIN L11-RELATED"/>
    <property type="match status" value="1"/>
</dbReference>
<dbReference type="Pfam" id="PF00281">
    <property type="entry name" value="Ribosomal_L5"/>
    <property type="match status" value="1"/>
</dbReference>
<dbReference type="Pfam" id="PF00673">
    <property type="entry name" value="Ribosomal_L5_C"/>
    <property type="match status" value="1"/>
</dbReference>
<dbReference type="PIRSF" id="PIRSF002161">
    <property type="entry name" value="Ribosomal_L5"/>
    <property type="match status" value="1"/>
</dbReference>
<dbReference type="SUPFAM" id="SSF55282">
    <property type="entry name" value="RL5-like"/>
    <property type="match status" value="1"/>
</dbReference>
<dbReference type="PROSITE" id="PS00358">
    <property type="entry name" value="RIBOSOMAL_L5"/>
    <property type="match status" value="1"/>
</dbReference>
<protein>
    <recommendedName>
        <fullName evidence="2">Large ribosomal subunit protein uL5c</fullName>
    </recommendedName>
    <alternativeName>
        <fullName>50S ribosomal protein L5, chloroplastic</fullName>
    </alternativeName>
</protein>
<reference key="1">
    <citation type="journal article" date="2000" name="Nature">
        <title>Ancestral chloroplast genome in Mesostigma viride reveals an early branch of green plant evolution.</title>
        <authorList>
            <person name="Lemieux C."/>
            <person name="Otis C."/>
            <person name="Turmel M."/>
        </authorList>
    </citation>
    <scope>NUCLEOTIDE SEQUENCE [LARGE SCALE GENOMIC DNA]</scope>
    <source>
        <strain>NIES-296 / KY-14 / CCMP 2046</strain>
    </source>
</reference>
<organism>
    <name type="scientific">Mesostigma viride</name>
    <name type="common">Green alga</name>
    <dbReference type="NCBI Taxonomy" id="41882"/>
    <lineage>
        <taxon>Eukaryota</taxon>
        <taxon>Viridiplantae</taxon>
        <taxon>Streptophyta</taxon>
        <taxon>Mesostigmatophyceae</taxon>
        <taxon>Mesostigmatales</taxon>
        <taxon>Mesostigmataceae</taxon>
        <taxon>Mesostigma</taxon>
    </lineage>
</organism>
<proteinExistence type="inferred from homology"/>